<comment type="subcellular location">
    <subcellularLocation>
        <location evidence="1">Membrane</location>
        <topology evidence="1">Multi-pass membrane protein</topology>
    </subcellularLocation>
</comment>
<comment type="miscellaneous">
    <text evidence="2">Completely overlaps RSC30.</text>
</comment>
<comment type="caution">
    <text evidence="3">Product of a dubious gene prediction unlikely to encode a functional protein. Because of that it is not part of the S.cerevisiae S288c complete/reference proteome set.</text>
</comment>
<reference key="1">
    <citation type="journal article" date="1994" name="Science">
        <title>Complete nucleotide sequence of Saccharomyces cerevisiae chromosome VIII.</title>
        <authorList>
            <person name="Johnston M."/>
            <person name="Andrews S."/>
            <person name="Brinkman R."/>
            <person name="Cooper J."/>
            <person name="Ding H."/>
            <person name="Dover J."/>
            <person name="Du Z."/>
            <person name="Favello A."/>
            <person name="Fulton L."/>
            <person name="Gattung S."/>
            <person name="Geisel C."/>
            <person name="Kirsten J."/>
            <person name="Kucaba T."/>
            <person name="Hillier L.W."/>
            <person name="Jier M."/>
            <person name="Johnston L."/>
            <person name="Langston Y."/>
            <person name="Latreille P."/>
            <person name="Louis E.J."/>
            <person name="Macri C."/>
            <person name="Mardis E."/>
            <person name="Menezes S."/>
            <person name="Mouser L."/>
            <person name="Nhan M."/>
            <person name="Rifkin L."/>
            <person name="Riles L."/>
            <person name="St Peter H."/>
            <person name="Trevaskis E."/>
            <person name="Vaughan K."/>
            <person name="Vignati D."/>
            <person name="Wilcox L."/>
            <person name="Wohldman P."/>
            <person name="Waterston R."/>
            <person name="Wilson R."/>
            <person name="Vaudin M."/>
        </authorList>
    </citation>
    <scope>NUCLEOTIDE SEQUENCE [LARGE SCALE GENOMIC DNA]</scope>
    <source>
        <strain>ATCC 204508 / S288c</strain>
    </source>
</reference>
<reference key="2">
    <citation type="journal article" date="2014" name="G3 (Bethesda)">
        <title>The reference genome sequence of Saccharomyces cerevisiae: Then and now.</title>
        <authorList>
            <person name="Engel S.R."/>
            <person name="Dietrich F.S."/>
            <person name="Fisk D.G."/>
            <person name="Binkley G."/>
            <person name="Balakrishnan R."/>
            <person name="Costanzo M.C."/>
            <person name="Dwight S.S."/>
            <person name="Hitz B.C."/>
            <person name="Karra K."/>
            <person name="Nash R.S."/>
            <person name="Weng S."/>
            <person name="Wong E.D."/>
            <person name="Lloyd P."/>
            <person name="Skrzypek M.S."/>
            <person name="Miyasato S.R."/>
            <person name="Simison M."/>
            <person name="Cherry J.M."/>
        </authorList>
    </citation>
    <scope>GENOME REANNOTATION</scope>
    <source>
        <strain>ATCC 204508 / S288c</strain>
    </source>
</reference>
<feature type="chain" id="PRO_0000431021" description="Putative uncharacterized membrane protein YHR056W-A">
    <location>
        <begin position="1"/>
        <end position="144"/>
    </location>
</feature>
<feature type="transmembrane region" description="Helical; Name=1" evidence="1">
    <location>
        <begin position="10"/>
        <end position="30"/>
    </location>
</feature>
<feature type="transmembrane region" description="Helical; Name=2" evidence="1">
    <location>
        <begin position="60"/>
        <end position="80"/>
    </location>
</feature>
<sequence>MNITTNGTTILTRSSIIIGVIILVASGLGPLHRSIHRGVEREVECLYRRLHNRILRLNHYVFLIYTVSLTKMVGTLAIAVRGHPGRRGHSDHLTRSIWIKTVRLVILDAIPTYRFCPVAPDLSLPALGASRRLPHFSHLHVHHD</sequence>
<organism>
    <name type="scientific">Saccharomyces cerevisiae (strain ATCC 204508 / S288c)</name>
    <name type="common">Baker's yeast</name>
    <dbReference type="NCBI Taxonomy" id="559292"/>
    <lineage>
        <taxon>Eukaryota</taxon>
        <taxon>Fungi</taxon>
        <taxon>Dikarya</taxon>
        <taxon>Ascomycota</taxon>
        <taxon>Saccharomycotina</taxon>
        <taxon>Saccharomycetes</taxon>
        <taxon>Saccharomycetales</taxon>
        <taxon>Saccharomycetaceae</taxon>
        <taxon>Saccharomyces</taxon>
    </lineage>
</organism>
<evidence type="ECO:0000255" key="1"/>
<evidence type="ECO:0000305" key="2"/>
<evidence type="ECO:0000305" key="3">
    <source>
    </source>
</evidence>
<evidence type="ECO:0000312" key="4">
    <source>
        <dbReference type="SGD" id="S000028777"/>
    </source>
</evidence>
<gene>
    <name evidence="4" type="ordered locus">YHR056W-A</name>
</gene>
<name>YH056_YEAST</name>
<dbReference type="EMBL" id="KJ412257">
    <property type="protein sequence ID" value="AHX39300.1"/>
    <property type="molecule type" value="Genomic_DNA"/>
</dbReference>
<dbReference type="STRING" id="4932.YHR056W-A"/>
<dbReference type="PaxDb" id="4932-YHR056W-A"/>
<dbReference type="EnsemblFungi" id="YHR056W-A_mRNA">
    <property type="protein sequence ID" value="YHR056W-A"/>
    <property type="gene ID" value="YHR056W-A"/>
</dbReference>
<dbReference type="AGR" id="SGD:S000028777"/>
<dbReference type="SGD" id="S000028777">
    <property type="gene designation" value="YHR056W-A"/>
</dbReference>
<dbReference type="HOGENOM" id="CLU_1797566_0_0_1"/>
<dbReference type="GO" id="GO:0016020">
    <property type="term" value="C:membrane"/>
    <property type="evidence" value="ECO:0007669"/>
    <property type="project" value="UniProtKB-SubCell"/>
</dbReference>
<protein>
    <recommendedName>
        <fullName evidence="2">Putative uncharacterized membrane protein YHR056W-A</fullName>
    </recommendedName>
</protein>
<proteinExistence type="uncertain"/>
<keyword id="KW-0472">Membrane</keyword>
<keyword id="KW-0812">Transmembrane</keyword>
<keyword id="KW-1133">Transmembrane helix</keyword>
<accession>A0A023PXL7</accession>